<dbReference type="EC" id="7.2.2.12"/>
<dbReference type="EC" id="7.2.2.21"/>
<dbReference type="EMBL" id="AJ297264">
    <property type="protein sequence ID" value="CAC19544.1"/>
    <property type="molecule type" value="mRNA"/>
</dbReference>
<dbReference type="EMBL" id="AC002392">
    <property type="protein sequence ID" value="AAD12041.1"/>
    <property type="molecule type" value="Genomic_DNA"/>
</dbReference>
<dbReference type="EMBL" id="CP002685">
    <property type="protein sequence ID" value="AEC06848.1"/>
    <property type="molecule type" value="Genomic_DNA"/>
</dbReference>
<dbReference type="EMBL" id="CP002685">
    <property type="protein sequence ID" value="ANM62252.1"/>
    <property type="molecule type" value="Genomic_DNA"/>
</dbReference>
<dbReference type="EMBL" id="CP002685">
    <property type="protein sequence ID" value="ANM62253.1"/>
    <property type="molecule type" value="Genomic_DNA"/>
</dbReference>
<dbReference type="EMBL" id="AY096796">
    <property type="protein sequence ID" value="AAM19954.1"/>
    <property type="molecule type" value="mRNA"/>
</dbReference>
<dbReference type="PIR" id="F84572">
    <property type="entry name" value="F84572"/>
</dbReference>
<dbReference type="RefSeq" id="NP_001318247.1">
    <property type="nucleotide sequence ID" value="NM_001335621.1"/>
</dbReference>
<dbReference type="RefSeq" id="NP_001324425.1">
    <property type="nucleotide sequence ID" value="NM_001335622.1"/>
</dbReference>
<dbReference type="RefSeq" id="NP_179501.1">
    <property type="nucleotide sequence ID" value="NM_127468.5"/>
</dbReference>
<dbReference type="PDB" id="2KKH">
    <property type="method" value="NMR"/>
    <property type="chains" value="A=2-96"/>
</dbReference>
<dbReference type="PDBsum" id="2KKH"/>
<dbReference type="SMR" id="O64474"/>
<dbReference type="BioGRID" id="1785">
    <property type="interactions" value="1"/>
</dbReference>
<dbReference type="FunCoup" id="O64474">
    <property type="interactions" value="36"/>
</dbReference>
<dbReference type="IntAct" id="O64474">
    <property type="interactions" value="1"/>
</dbReference>
<dbReference type="STRING" id="3702.O64474"/>
<dbReference type="TCDB" id="3.A.3.6.18">
    <property type="family name" value="the p-type atpase (p-atpase) superfamily"/>
</dbReference>
<dbReference type="GlyGen" id="O64474">
    <property type="glycosylation" value="2 sites"/>
</dbReference>
<dbReference type="PaxDb" id="3702-AT2G19110.1"/>
<dbReference type="ProteomicsDB" id="230352"/>
<dbReference type="EnsemblPlants" id="AT2G19110.1">
    <property type="protein sequence ID" value="AT2G19110.1"/>
    <property type="gene ID" value="AT2G19110"/>
</dbReference>
<dbReference type="EnsemblPlants" id="AT2G19110.2">
    <property type="protein sequence ID" value="AT2G19110.2"/>
    <property type="gene ID" value="AT2G19110"/>
</dbReference>
<dbReference type="EnsemblPlants" id="AT2G19110.3">
    <property type="protein sequence ID" value="AT2G19110.3"/>
    <property type="gene ID" value="AT2G19110"/>
</dbReference>
<dbReference type="GeneID" id="816428"/>
<dbReference type="Gramene" id="AT2G19110.1">
    <property type="protein sequence ID" value="AT2G19110.1"/>
    <property type="gene ID" value="AT2G19110"/>
</dbReference>
<dbReference type="Gramene" id="AT2G19110.2">
    <property type="protein sequence ID" value="AT2G19110.2"/>
    <property type="gene ID" value="AT2G19110"/>
</dbReference>
<dbReference type="Gramene" id="AT2G19110.3">
    <property type="protein sequence ID" value="AT2G19110.3"/>
    <property type="gene ID" value="AT2G19110"/>
</dbReference>
<dbReference type="KEGG" id="ath:AT2G19110"/>
<dbReference type="Araport" id="AT2G19110"/>
<dbReference type="TAIR" id="AT2G19110">
    <property type="gene designation" value="HMA4"/>
</dbReference>
<dbReference type="eggNOG" id="KOG0207">
    <property type="taxonomic scope" value="Eukaryota"/>
</dbReference>
<dbReference type="HOGENOM" id="CLU_001771_3_1_1"/>
<dbReference type="InParanoid" id="O64474"/>
<dbReference type="OMA" id="CHENAGL"/>
<dbReference type="PhylomeDB" id="O64474"/>
<dbReference type="BioCyc" id="ARA:AT2G19110-MONOMER"/>
<dbReference type="EvolutionaryTrace" id="O64474"/>
<dbReference type="PRO" id="PR:O64474"/>
<dbReference type="Proteomes" id="UP000006548">
    <property type="component" value="Chromosome 2"/>
</dbReference>
<dbReference type="ExpressionAtlas" id="O64474">
    <property type="expression patterns" value="baseline and differential"/>
</dbReference>
<dbReference type="GO" id="GO:0005886">
    <property type="term" value="C:plasma membrane"/>
    <property type="evidence" value="ECO:0000304"/>
    <property type="project" value="TAIR"/>
</dbReference>
<dbReference type="GO" id="GO:0009506">
    <property type="term" value="C:plasmodesma"/>
    <property type="evidence" value="ECO:0007005"/>
    <property type="project" value="TAIR"/>
</dbReference>
<dbReference type="GO" id="GO:0005524">
    <property type="term" value="F:ATP binding"/>
    <property type="evidence" value="ECO:0007669"/>
    <property type="project" value="UniProtKB-KW"/>
</dbReference>
<dbReference type="GO" id="GO:0016887">
    <property type="term" value="F:ATP hydrolysis activity"/>
    <property type="evidence" value="ECO:0007669"/>
    <property type="project" value="InterPro"/>
</dbReference>
<dbReference type="GO" id="GO:0046872">
    <property type="term" value="F:metal ion binding"/>
    <property type="evidence" value="ECO:0007669"/>
    <property type="project" value="UniProtKB-KW"/>
</dbReference>
<dbReference type="GO" id="GO:0008551">
    <property type="term" value="F:P-type cadmium transporter activity"/>
    <property type="evidence" value="ECO:0007669"/>
    <property type="project" value="UniProtKB-EC"/>
</dbReference>
<dbReference type="GO" id="GO:0016463">
    <property type="term" value="F:P-type zinc transporter activity"/>
    <property type="evidence" value="ECO:0007669"/>
    <property type="project" value="UniProtKB-EC"/>
</dbReference>
<dbReference type="GO" id="GO:0015691">
    <property type="term" value="P:cadmium ion transport"/>
    <property type="evidence" value="ECO:0000315"/>
    <property type="project" value="TAIR"/>
</dbReference>
<dbReference type="GO" id="GO:0030001">
    <property type="term" value="P:metal ion transport"/>
    <property type="evidence" value="ECO:0000315"/>
    <property type="project" value="TAIR"/>
</dbReference>
<dbReference type="GO" id="GO:0046686">
    <property type="term" value="P:response to cadmium ion"/>
    <property type="evidence" value="ECO:0000315"/>
    <property type="project" value="TAIR"/>
</dbReference>
<dbReference type="GO" id="GO:0032025">
    <property type="term" value="P:response to cobalt ion"/>
    <property type="evidence" value="ECO:0000315"/>
    <property type="project" value="TAIR"/>
</dbReference>
<dbReference type="GO" id="GO:0010038">
    <property type="term" value="P:response to metal ion"/>
    <property type="evidence" value="ECO:0000315"/>
    <property type="project" value="TAIR"/>
</dbReference>
<dbReference type="GO" id="GO:0010043">
    <property type="term" value="P:response to zinc ion"/>
    <property type="evidence" value="ECO:0000315"/>
    <property type="project" value="TAIR"/>
</dbReference>
<dbReference type="GO" id="GO:0006829">
    <property type="term" value="P:zinc ion transport"/>
    <property type="evidence" value="ECO:0000315"/>
    <property type="project" value="TAIR"/>
</dbReference>
<dbReference type="CDD" id="cd02079">
    <property type="entry name" value="P-type_ATPase_HM"/>
    <property type="match status" value="1"/>
</dbReference>
<dbReference type="FunFam" id="2.70.150.10:FF:000002">
    <property type="entry name" value="Copper-transporting ATPase 1, putative"/>
    <property type="match status" value="1"/>
</dbReference>
<dbReference type="FunFam" id="3.30.70.100:FF:000022">
    <property type="entry name" value="Putative cadmium/zinc-transporting ATPase 3"/>
    <property type="match status" value="1"/>
</dbReference>
<dbReference type="FunFam" id="3.40.1110.10:FF:000043">
    <property type="entry name" value="Putative cadmium/zinc-transporting ATPase 3"/>
    <property type="match status" value="1"/>
</dbReference>
<dbReference type="Gene3D" id="3.30.70.100">
    <property type="match status" value="1"/>
</dbReference>
<dbReference type="Gene3D" id="3.40.1110.10">
    <property type="entry name" value="Calcium-transporting ATPase, cytoplasmic domain N"/>
    <property type="match status" value="1"/>
</dbReference>
<dbReference type="Gene3D" id="2.70.150.10">
    <property type="entry name" value="Calcium-transporting ATPase, cytoplasmic transduction domain A"/>
    <property type="match status" value="1"/>
</dbReference>
<dbReference type="Gene3D" id="3.40.50.1000">
    <property type="entry name" value="HAD superfamily/HAD-like"/>
    <property type="match status" value="1"/>
</dbReference>
<dbReference type="InterPro" id="IPR023299">
    <property type="entry name" value="ATPase_P-typ_cyto_dom_N"/>
</dbReference>
<dbReference type="InterPro" id="IPR018303">
    <property type="entry name" value="ATPase_P-typ_P_site"/>
</dbReference>
<dbReference type="InterPro" id="IPR023298">
    <property type="entry name" value="ATPase_P-typ_TM_dom_sf"/>
</dbReference>
<dbReference type="InterPro" id="IPR008250">
    <property type="entry name" value="ATPase_P-typ_transduc_dom_A_sf"/>
</dbReference>
<dbReference type="InterPro" id="IPR051014">
    <property type="entry name" value="Cation_Transport_ATPase_IB"/>
</dbReference>
<dbReference type="InterPro" id="IPR036412">
    <property type="entry name" value="HAD-like_sf"/>
</dbReference>
<dbReference type="InterPro" id="IPR023214">
    <property type="entry name" value="HAD_sf"/>
</dbReference>
<dbReference type="InterPro" id="IPR006121">
    <property type="entry name" value="HMA_dom"/>
</dbReference>
<dbReference type="InterPro" id="IPR036163">
    <property type="entry name" value="HMA_dom_sf"/>
</dbReference>
<dbReference type="InterPro" id="IPR027256">
    <property type="entry name" value="P-typ_ATPase_IB"/>
</dbReference>
<dbReference type="InterPro" id="IPR001757">
    <property type="entry name" value="P_typ_ATPase"/>
</dbReference>
<dbReference type="InterPro" id="IPR044492">
    <property type="entry name" value="P_typ_ATPase_HD_dom"/>
</dbReference>
<dbReference type="NCBIfam" id="TIGR01512">
    <property type="entry name" value="ATPase-IB2_Cd"/>
    <property type="match status" value="1"/>
</dbReference>
<dbReference type="NCBIfam" id="TIGR01525">
    <property type="entry name" value="ATPase-IB_hvy"/>
    <property type="match status" value="1"/>
</dbReference>
<dbReference type="NCBIfam" id="TIGR01494">
    <property type="entry name" value="ATPase_P-type"/>
    <property type="match status" value="1"/>
</dbReference>
<dbReference type="PANTHER" id="PTHR48085">
    <property type="entry name" value="CADMIUM/ZINC-TRANSPORTING ATPASE HMA2-RELATED"/>
    <property type="match status" value="1"/>
</dbReference>
<dbReference type="PANTHER" id="PTHR48085:SF5">
    <property type="entry name" value="CADMIUM_ZINC-TRANSPORTING ATPASE HMA4-RELATED"/>
    <property type="match status" value="1"/>
</dbReference>
<dbReference type="Pfam" id="PF00122">
    <property type="entry name" value="E1-E2_ATPase"/>
    <property type="match status" value="1"/>
</dbReference>
<dbReference type="Pfam" id="PF00702">
    <property type="entry name" value="Hydrolase"/>
    <property type="match status" value="1"/>
</dbReference>
<dbReference type="PRINTS" id="PR00119">
    <property type="entry name" value="CATATPASE"/>
</dbReference>
<dbReference type="PRINTS" id="PR00943">
    <property type="entry name" value="CUATPASE"/>
</dbReference>
<dbReference type="SFLD" id="SFLDS00003">
    <property type="entry name" value="Haloacid_Dehalogenase"/>
    <property type="match status" value="1"/>
</dbReference>
<dbReference type="SFLD" id="SFLDF00027">
    <property type="entry name" value="p-type_atpase"/>
    <property type="match status" value="1"/>
</dbReference>
<dbReference type="SUPFAM" id="SSF81653">
    <property type="entry name" value="Calcium ATPase, transduction domain A"/>
    <property type="match status" value="1"/>
</dbReference>
<dbReference type="SUPFAM" id="SSF81665">
    <property type="entry name" value="Calcium ATPase, transmembrane domain M"/>
    <property type="match status" value="1"/>
</dbReference>
<dbReference type="SUPFAM" id="SSF56784">
    <property type="entry name" value="HAD-like"/>
    <property type="match status" value="1"/>
</dbReference>
<dbReference type="SUPFAM" id="SSF55008">
    <property type="entry name" value="HMA, heavy metal-associated domain"/>
    <property type="match status" value="1"/>
</dbReference>
<dbReference type="PROSITE" id="PS00154">
    <property type="entry name" value="ATPASE_E1_E2"/>
    <property type="match status" value="1"/>
</dbReference>
<dbReference type="PROSITE" id="PS50846">
    <property type="entry name" value="HMA_2"/>
    <property type="match status" value="1"/>
</dbReference>
<keyword id="KW-0002">3D-structure</keyword>
<keyword id="KW-0067">ATP-binding</keyword>
<keyword id="KW-0104">Cadmium</keyword>
<keyword id="KW-0460">Magnesium</keyword>
<keyword id="KW-0472">Membrane</keyword>
<keyword id="KW-0479">Metal-binding</keyword>
<keyword id="KW-0547">Nucleotide-binding</keyword>
<keyword id="KW-1185">Reference proteome</keyword>
<keyword id="KW-1278">Translocase</keyword>
<keyword id="KW-0812">Transmembrane</keyword>
<keyword id="KW-1133">Transmembrane helix</keyword>
<keyword id="KW-0862">Zinc</keyword>
<accession>O64474</accession>
<gene>
    <name type="primary">HMA4</name>
    <name type="ordered locus">At2g19110</name>
    <name type="ORF">T20K24.12</name>
</gene>
<evidence type="ECO:0000250" key="1"/>
<evidence type="ECO:0000255" key="2"/>
<evidence type="ECO:0000255" key="3">
    <source>
        <dbReference type="PROSITE-ProRule" id="PRU00280"/>
    </source>
</evidence>
<evidence type="ECO:0000305" key="4"/>
<evidence type="ECO:0007829" key="5">
    <source>
        <dbReference type="PDB" id="2KKH"/>
    </source>
</evidence>
<feature type="chain" id="PRO_0000046399" description="Putative cadmium/zinc-transporting ATPase HMA4">
    <location>
        <begin position="1"/>
        <end position="1172"/>
    </location>
</feature>
<feature type="topological domain" description="Cytoplasmic" evidence="2">
    <location>
        <begin position="1"/>
        <end position="93"/>
    </location>
</feature>
<feature type="transmembrane region" description="Helical" evidence="2">
    <location>
        <begin position="94"/>
        <end position="115"/>
    </location>
</feature>
<feature type="topological domain" description="Extracellular" evidence="2">
    <location>
        <begin position="116"/>
        <end position="118"/>
    </location>
</feature>
<feature type="transmembrane region" description="Helical" evidence="2">
    <location>
        <begin position="119"/>
        <end position="138"/>
    </location>
</feature>
<feature type="topological domain" description="Cytoplasmic" evidence="2">
    <location>
        <begin position="139"/>
        <end position="145"/>
    </location>
</feature>
<feature type="transmembrane region" description="Helical" evidence="2">
    <location>
        <begin position="146"/>
        <end position="166"/>
    </location>
</feature>
<feature type="topological domain" description="Extracellular" evidence="2">
    <location>
        <position position="167"/>
    </location>
</feature>
<feature type="transmembrane region" description="Helical" evidence="2">
    <location>
        <begin position="168"/>
        <end position="188"/>
    </location>
</feature>
<feature type="topological domain" description="Cytoplasmic" evidence="2">
    <location>
        <begin position="189"/>
        <end position="314"/>
    </location>
</feature>
<feature type="transmembrane region" description="Helical" evidence="2">
    <location>
        <begin position="315"/>
        <end position="337"/>
    </location>
</feature>
<feature type="topological domain" description="Extracellular" evidence="2">
    <location>
        <begin position="338"/>
        <end position="345"/>
    </location>
</feature>
<feature type="transmembrane region" description="Helical" evidence="2">
    <location>
        <begin position="346"/>
        <end position="363"/>
    </location>
</feature>
<feature type="topological domain" description="Cytoplasmic" evidence="2">
    <location>
        <begin position="364"/>
        <end position="656"/>
    </location>
</feature>
<feature type="transmembrane region" description="Helical" evidence="2">
    <location>
        <begin position="657"/>
        <end position="676"/>
    </location>
</feature>
<feature type="topological domain" description="Extracellular" evidence="2">
    <location>
        <begin position="677"/>
        <end position="680"/>
    </location>
</feature>
<feature type="transmembrane region" description="Helical" evidence="2">
    <location>
        <begin position="681"/>
        <end position="700"/>
    </location>
</feature>
<feature type="topological domain" description="Cytoplasmic" evidence="2">
    <location>
        <begin position="701"/>
        <end position="1172"/>
    </location>
</feature>
<feature type="domain" description="HMA" evidence="3">
    <location>
        <begin position="17"/>
        <end position="83"/>
    </location>
</feature>
<feature type="active site" description="4-aspartylphosphate intermediate" evidence="1">
    <location>
        <position position="401"/>
    </location>
</feature>
<feature type="binding site">
    <location>
        <position position="601"/>
    </location>
    <ligand>
        <name>Mg(2+)</name>
        <dbReference type="ChEBI" id="CHEBI:18420"/>
    </ligand>
</feature>
<feature type="binding site">
    <location>
        <position position="605"/>
    </location>
    <ligand>
        <name>Mg(2+)</name>
        <dbReference type="ChEBI" id="CHEBI:18420"/>
    </ligand>
</feature>
<feature type="helix" evidence="5">
    <location>
        <begin position="6"/>
        <end position="8"/>
    </location>
</feature>
<feature type="strand" evidence="5">
    <location>
        <begin position="16"/>
        <end position="23"/>
    </location>
</feature>
<feature type="turn" evidence="5">
    <location>
        <begin position="28"/>
        <end position="31"/>
    </location>
</feature>
<feature type="helix" evidence="5">
    <location>
        <begin position="32"/>
        <end position="41"/>
    </location>
</feature>
<feature type="strand" evidence="5">
    <location>
        <begin position="42"/>
        <end position="51"/>
    </location>
</feature>
<feature type="turn" evidence="5">
    <location>
        <begin position="52"/>
        <end position="55"/>
    </location>
</feature>
<feature type="strand" evidence="5">
    <location>
        <begin position="56"/>
        <end position="61"/>
    </location>
</feature>
<feature type="turn" evidence="5">
    <location>
        <begin position="63"/>
        <end position="65"/>
    </location>
</feature>
<feature type="helix" evidence="5">
    <location>
        <begin position="68"/>
        <end position="78"/>
    </location>
</feature>
<feature type="strand" evidence="5">
    <location>
        <begin position="82"/>
        <end position="85"/>
    </location>
</feature>
<sequence length="1172" mass="127209">MALQNKEEEKKKVKKLQKSYFDVLGICCTSEVPIIENILKSLDGVKEYSVIVPSRTVIVVHDSLLISPFQIAKALNEARLEANVRVNGETSFKNKWPSPFAVVSGLLLLLSFLKFVYSPLRWLAVAAVAAGIYPILAKAFASIKRPRIDINILVIITVIATLAMQDFMEAAAVVFLFTISDWLETRASYKATSVMQSLMSLAPQKAIIAETGEEVEVDEVKVDTVVAVKAGETIPIDGIVVDGNCEVDEKTLTGEAFPVPKQRDSTVWAGTINLNGYICVKTTSLAGDCVVAKMAKLVEEAQSSKTKSQRLIDKCSQYYTPAIILVSACVAIVPVIMKVHNLKHWFHLALVVLVSGCPCGLILSTPVATFCALTKAATSGLLIKSADYLDTLSKIKIVAFDKTGTITRGEFIVIDFKSLSRDINLRSLLYWVSSVESKSSHPMAATIVDYAKSVSVEPRPEEVEDYQNFPGEGIYGKIDGNDIFIGNKKIASRAGCSTVPEIEVDTKGGKTVGYVYVGERLAGFFNLSDACRSGVSQAMAELKSLGIKTAMLTGDNQAAAMHAQEQLGNVLDVVHGDLLPEDKSRIIQEFKKEGPTAMVGDGVNDAPALATADIGISMGISGSALATQTGNIILMSNDIRRIPQAVKLARRARRKVVENVCLSIILKAGILALAFAGHPLIWAAVLVDVGTCLLVIFNSMLLLREKKKIGNKKCYRASTSKLNGRKLEGDDDYVVDLEAGLLTKSGNGQCKSSCCGDKKNQENVVMMKPSSKTSSDHSHPGCCGDKKEEKVKPLVKDGCCSEKTRKSEGDMVSLSSCKKSSHVKHDLKMKGGSGCCASKNEKGKEVVAKSCCEKPKQQVESVGDCKSGHCEKKKQAEDIVVPVQIIGHALTHVEIELQTKETCKTSCCDSKEKVKETGLLLSSENTPYLEKGVLIKDEGNCKSGSENMGTVKQSCHEKGCSDEKQTGEITLASEEETDDQDCSSGCCVNEGTVKQSFDEKKHSVLVEKEGLDMETGFCCDAKLVCCGNTEGEVKEQCRLEIKKEEHCKSGCCGEEIQTGEITLVSEEETESTNCSTGCCVDKEEVTQTCHEKPASLVVSGLEVKKDEHCESSHRAVKVETCCKVKIPEACASKCRDRAKRHSGKSCCRSYAKELCSHRHHHHHHHHHHHVSA</sequence>
<protein>
    <recommendedName>
        <fullName>Putative cadmium/zinc-transporting ATPase HMA4</fullName>
        <ecNumber>7.2.2.12</ecNumber>
        <ecNumber>7.2.2.21</ecNumber>
    </recommendedName>
    <alternativeName>
        <fullName>Protein HEAVY METAL ATPASE 4</fullName>
    </alternativeName>
    <alternativeName>
        <fullName>Putative cadmium/zinc-transporting ATPase 2</fullName>
    </alternativeName>
</protein>
<comment type="function">
    <text evidence="4">Involved in cadmium/zinc transport.</text>
</comment>
<comment type="catalytic activity">
    <reaction>
        <text>Zn(2+)(in) + ATP + H2O = Zn(2+)(out) + ADP + phosphate + H(+)</text>
        <dbReference type="Rhea" id="RHEA:20621"/>
        <dbReference type="ChEBI" id="CHEBI:15377"/>
        <dbReference type="ChEBI" id="CHEBI:15378"/>
        <dbReference type="ChEBI" id="CHEBI:29105"/>
        <dbReference type="ChEBI" id="CHEBI:30616"/>
        <dbReference type="ChEBI" id="CHEBI:43474"/>
        <dbReference type="ChEBI" id="CHEBI:456216"/>
        <dbReference type="EC" id="7.2.2.12"/>
    </reaction>
</comment>
<comment type="catalytic activity">
    <reaction>
        <text>Cd(2+)(in) + ATP + H2O = Cd(2+)(out) + ADP + phosphate + H(+)</text>
        <dbReference type="Rhea" id="RHEA:12132"/>
        <dbReference type="ChEBI" id="CHEBI:15377"/>
        <dbReference type="ChEBI" id="CHEBI:15378"/>
        <dbReference type="ChEBI" id="CHEBI:30616"/>
        <dbReference type="ChEBI" id="CHEBI:43474"/>
        <dbReference type="ChEBI" id="CHEBI:48775"/>
        <dbReference type="ChEBI" id="CHEBI:456216"/>
        <dbReference type="EC" id="7.2.2.21"/>
    </reaction>
</comment>
<comment type="subcellular location">
    <subcellularLocation>
        <location>Membrane</location>
        <topology>Multi-pass membrane protein</topology>
    </subcellularLocation>
</comment>
<comment type="similarity">
    <text evidence="4">Belongs to the cation transport ATPase (P-type) (TC 3.A.3) family. Type IB subfamily.</text>
</comment>
<reference key="1">
    <citation type="journal article" date="2003" name="Plant J.">
        <title>Functional expression of AtHMA4, a P1B-type ATPase of the Zn/Co/Cd/Pb subclass.</title>
        <authorList>
            <person name="Mills R.F."/>
            <person name="Krijger G.C."/>
            <person name="Baccarini P.J."/>
            <person name="Hall J.L."/>
            <person name="Williams L.E."/>
        </authorList>
    </citation>
    <scope>NUCLEOTIDE SEQUENCE [MRNA]</scope>
    <source>
        <strain>cv. Columbia</strain>
        <tissue>Root</tissue>
    </source>
</reference>
<reference key="2">
    <citation type="journal article" date="1999" name="Nature">
        <title>Sequence and analysis of chromosome 2 of the plant Arabidopsis thaliana.</title>
        <authorList>
            <person name="Lin X."/>
            <person name="Kaul S."/>
            <person name="Rounsley S.D."/>
            <person name="Shea T.P."/>
            <person name="Benito M.-I."/>
            <person name="Town C.D."/>
            <person name="Fujii C.Y."/>
            <person name="Mason T.M."/>
            <person name="Bowman C.L."/>
            <person name="Barnstead M.E."/>
            <person name="Feldblyum T.V."/>
            <person name="Buell C.R."/>
            <person name="Ketchum K.A."/>
            <person name="Lee J.J."/>
            <person name="Ronning C.M."/>
            <person name="Koo H.L."/>
            <person name="Moffat K.S."/>
            <person name="Cronin L.A."/>
            <person name="Shen M."/>
            <person name="Pai G."/>
            <person name="Van Aken S."/>
            <person name="Umayam L."/>
            <person name="Tallon L.J."/>
            <person name="Gill J.E."/>
            <person name="Adams M.D."/>
            <person name="Carrera A.J."/>
            <person name="Creasy T.H."/>
            <person name="Goodman H.M."/>
            <person name="Somerville C.R."/>
            <person name="Copenhaver G.P."/>
            <person name="Preuss D."/>
            <person name="Nierman W.C."/>
            <person name="White O."/>
            <person name="Eisen J.A."/>
            <person name="Salzberg S.L."/>
            <person name="Fraser C.M."/>
            <person name="Venter J.C."/>
        </authorList>
    </citation>
    <scope>NUCLEOTIDE SEQUENCE [LARGE SCALE GENOMIC DNA]</scope>
    <source>
        <strain>cv. Columbia</strain>
    </source>
</reference>
<reference key="3">
    <citation type="journal article" date="2017" name="Plant J.">
        <title>Araport11: a complete reannotation of the Arabidopsis thaliana reference genome.</title>
        <authorList>
            <person name="Cheng C.Y."/>
            <person name="Krishnakumar V."/>
            <person name="Chan A.P."/>
            <person name="Thibaud-Nissen F."/>
            <person name="Schobel S."/>
            <person name="Town C.D."/>
        </authorList>
    </citation>
    <scope>GENOME REANNOTATION</scope>
    <source>
        <strain>cv. Columbia</strain>
    </source>
</reference>
<reference key="4">
    <citation type="journal article" date="2003" name="Science">
        <title>Empirical analysis of transcriptional activity in the Arabidopsis genome.</title>
        <authorList>
            <person name="Yamada K."/>
            <person name="Lim J."/>
            <person name="Dale J.M."/>
            <person name="Chen H."/>
            <person name="Shinn P."/>
            <person name="Palm C.J."/>
            <person name="Southwick A.M."/>
            <person name="Wu H.C."/>
            <person name="Kim C.J."/>
            <person name="Nguyen M."/>
            <person name="Pham P.K."/>
            <person name="Cheuk R.F."/>
            <person name="Karlin-Newmann G."/>
            <person name="Liu S.X."/>
            <person name="Lam B."/>
            <person name="Sakano H."/>
            <person name="Wu T."/>
            <person name="Yu G."/>
            <person name="Miranda M."/>
            <person name="Quach H.L."/>
            <person name="Tripp M."/>
            <person name="Chang C.H."/>
            <person name="Lee J.M."/>
            <person name="Toriumi M.J."/>
            <person name="Chan M.M."/>
            <person name="Tang C.C."/>
            <person name="Onodera C.S."/>
            <person name="Deng J.M."/>
            <person name="Akiyama K."/>
            <person name="Ansari Y."/>
            <person name="Arakawa T."/>
            <person name="Banh J."/>
            <person name="Banno F."/>
            <person name="Bowser L."/>
            <person name="Brooks S.Y."/>
            <person name="Carninci P."/>
            <person name="Chao Q."/>
            <person name="Choy N."/>
            <person name="Enju A."/>
            <person name="Goldsmith A.D."/>
            <person name="Gurjal M."/>
            <person name="Hansen N.F."/>
            <person name="Hayashizaki Y."/>
            <person name="Johnson-Hopson C."/>
            <person name="Hsuan V.W."/>
            <person name="Iida K."/>
            <person name="Karnes M."/>
            <person name="Khan S."/>
            <person name="Koesema E."/>
            <person name="Ishida J."/>
            <person name="Jiang P.X."/>
            <person name="Jones T."/>
            <person name="Kawai J."/>
            <person name="Kamiya A."/>
            <person name="Meyers C."/>
            <person name="Nakajima M."/>
            <person name="Narusaka M."/>
            <person name="Seki M."/>
            <person name="Sakurai T."/>
            <person name="Satou M."/>
            <person name="Tamse R."/>
            <person name="Vaysberg M."/>
            <person name="Wallender E.K."/>
            <person name="Wong C."/>
            <person name="Yamamura Y."/>
            <person name="Yuan S."/>
            <person name="Shinozaki K."/>
            <person name="Davis R.W."/>
            <person name="Theologis A."/>
            <person name="Ecker J.R."/>
        </authorList>
    </citation>
    <scope>NUCLEOTIDE SEQUENCE [LARGE SCALE MRNA]</scope>
    <source>
        <strain>cv. Columbia</strain>
    </source>
</reference>
<name>HMA4_ARATH</name>
<organism>
    <name type="scientific">Arabidopsis thaliana</name>
    <name type="common">Mouse-ear cress</name>
    <dbReference type="NCBI Taxonomy" id="3702"/>
    <lineage>
        <taxon>Eukaryota</taxon>
        <taxon>Viridiplantae</taxon>
        <taxon>Streptophyta</taxon>
        <taxon>Embryophyta</taxon>
        <taxon>Tracheophyta</taxon>
        <taxon>Spermatophyta</taxon>
        <taxon>Magnoliopsida</taxon>
        <taxon>eudicotyledons</taxon>
        <taxon>Gunneridae</taxon>
        <taxon>Pentapetalae</taxon>
        <taxon>rosids</taxon>
        <taxon>malvids</taxon>
        <taxon>Brassicales</taxon>
        <taxon>Brassicaceae</taxon>
        <taxon>Camelineae</taxon>
        <taxon>Arabidopsis</taxon>
    </lineage>
</organism>
<proteinExistence type="evidence at protein level"/>